<gene>
    <name evidence="1" type="primary">xghA</name>
    <name type="ordered locus">Cthe_1398</name>
</gene>
<reference key="1">
    <citation type="submission" date="2007-02" db="EMBL/GenBank/DDBJ databases">
        <title>Complete sequence of Clostridium thermocellum ATCC 27405.</title>
        <authorList>
            <consortium name="US DOE Joint Genome Institute"/>
            <person name="Copeland A."/>
            <person name="Lucas S."/>
            <person name="Lapidus A."/>
            <person name="Barry K."/>
            <person name="Detter J.C."/>
            <person name="Glavina del Rio T."/>
            <person name="Hammon N."/>
            <person name="Israni S."/>
            <person name="Dalin E."/>
            <person name="Tice H."/>
            <person name="Pitluck S."/>
            <person name="Chertkov O."/>
            <person name="Brettin T."/>
            <person name="Bruce D."/>
            <person name="Han C."/>
            <person name="Tapia R."/>
            <person name="Gilna P."/>
            <person name="Schmutz J."/>
            <person name="Larimer F."/>
            <person name="Land M."/>
            <person name="Hauser L."/>
            <person name="Kyrpides N."/>
            <person name="Mikhailova N."/>
            <person name="Wu J.H.D."/>
            <person name="Newcomb M."/>
            <person name="Richardson P."/>
        </authorList>
    </citation>
    <scope>NUCLEOTIDE SEQUENCE [LARGE SCALE GENOMIC DNA]</scope>
    <source>
        <strain>ATCC 27405 / DSM 1237 / JCM 9322 / NBRC 103400 / NCIMB 10682 / NRRL B-4536 / VPI 7372</strain>
    </source>
</reference>
<evidence type="ECO:0000250" key="1">
    <source>
        <dbReference type="UniProtKB" id="Q70DK5"/>
    </source>
</evidence>
<evidence type="ECO:0000255" key="2"/>
<evidence type="ECO:0000255" key="3">
    <source>
        <dbReference type="PROSITE-ProRule" id="PRU01102"/>
    </source>
</evidence>
<proteinExistence type="inferred from homology"/>
<dbReference type="EC" id="3.2.1.-"/>
<dbReference type="EMBL" id="CP000568">
    <property type="protein sequence ID" value="ABN52629.1"/>
    <property type="molecule type" value="Genomic_DNA"/>
</dbReference>
<dbReference type="RefSeq" id="WP_003518268.1">
    <property type="nucleotide sequence ID" value="NC_009012.1"/>
</dbReference>
<dbReference type="SMR" id="A3DFA0"/>
<dbReference type="STRING" id="203119.Cthe_1398"/>
<dbReference type="CAZy" id="GH74">
    <property type="family name" value="Glycoside Hydrolase Family 74"/>
</dbReference>
<dbReference type="GeneID" id="35805692"/>
<dbReference type="KEGG" id="cth:Cthe_1398"/>
<dbReference type="eggNOG" id="COG4447">
    <property type="taxonomic scope" value="Bacteria"/>
</dbReference>
<dbReference type="HOGENOM" id="CLU_004180_1_0_9"/>
<dbReference type="OrthoDB" id="9757947at2"/>
<dbReference type="BioCyc" id="MetaCyc:MONOMER-16464"/>
<dbReference type="Proteomes" id="UP000002145">
    <property type="component" value="Chromosome"/>
</dbReference>
<dbReference type="GO" id="GO:0004553">
    <property type="term" value="F:hydrolase activity, hydrolyzing O-glycosyl compounds"/>
    <property type="evidence" value="ECO:0007669"/>
    <property type="project" value="InterPro"/>
</dbReference>
<dbReference type="GO" id="GO:0030245">
    <property type="term" value="P:cellulose catabolic process"/>
    <property type="evidence" value="ECO:0007669"/>
    <property type="project" value="UniProtKB-KW"/>
</dbReference>
<dbReference type="GO" id="GO:0010411">
    <property type="term" value="P:xyloglucan metabolic process"/>
    <property type="evidence" value="ECO:0007669"/>
    <property type="project" value="TreeGrafter"/>
</dbReference>
<dbReference type="CDD" id="cd14256">
    <property type="entry name" value="Dockerin_I"/>
    <property type="match status" value="1"/>
</dbReference>
<dbReference type="CDD" id="cd15482">
    <property type="entry name" value="Sialidase_non-viral"/>
    <property type="match status" value="2"/>
</dbReference>
<dbReference type="FunFam" id="1.10.1330.10:FF:000001">
    <property type="entry name" value="Endoglucanase D"/>
    <property type="match status" value="1"/>
</dbReference>
<dbReference type="FunFam" id="2.130.10.10:FF:000534">
    <property type="entry name" value="Xyloglucanase Xgh74A"/>
    <property type="match status" value="1"/>
</dbReference>
<dbReference type="Gene3D" id="1.10.1330.10">
    <property type="entry name" value="Dockerin domain"/>
    <property type="match status" value="1"/>
</dbReference>
<dbReference type="Gene3D" id="2.130.10.10">
    <property type="entry name" value="YVTN repeat-like/Quinoprotein amine dehydrogenase"/>
    <property type="match status" value="2"/>
</dbReference>
<dbReference type="InterPro" id="IPR002105">
    <property type="entry name" value="Dockerin_1_rpt"/>
</dbReference>
<dbReference type="InterPro" id="IPR016134">
    <property type="entry name" value="Dockerin_dom"/>
</dbReference>
<dbReference type="InterPro" id="IPR036439">
    <property type="entry name" value="Dockerin_dom_sf"/>
</dbReference>
<dbReference type="InterPro" id="IPR018247">
    <property type="entry name" value="EF_Hand_1_Ca_BS"/>
</dbReference>
<dbReference type="InterPro" id="IPR015943">
    <property type="entry name" value="WD40/YVTN_repeat-like_dom_sf"/>
</dbReference>
<dbReference type="InterPro" id="IPR052025">
    <property type="entry name" value="Xyloglucanase_GH74"/>
</dbReference>
<dbReference type="PANTHER" id="PTHR43739:SF2">
    <property type="entry name" value="OLIGOXYLOGLUCAN-REDUCING END-SPECIFIC XYLOGLUCANASE-RELATED"/>
    <property type="match status" value="1"/>
</dbReference>
<dbReference type="PANTHER" id="PTHR43739">
    <property type="entry name" value="XYLOGLUCANASE (EUROFUNG)"/>
    <property type="match status" value="1"/>
</dbReference>
<dbReference type="Pfam" id="PF00404">
    <property type="entry name" value="Dockerin_1"/>
    <property type="match status" value="1"/>
</dbReference>
<dbReference type="SUPFAM" id="SSF110296">
    <property type="entry name" value="Oligoxyloglucan reducing end-specific cellobiohydrolase"/>
    <property type="match status" value="2"/>
</dbReference>
<dbReference type="SUPFAM" id="SSF63446">
    <property type="entry name" value="Type I dockerin domain"/>
    <property type="match status" value="1"/>
</dbReference>
<dbReference type="PROSITE" id="PS00448">
    <property type="entry name" value="CLOS_CELLULOSOME_RPT"/>
    <property type="match status" value="2"/>
</dbReference>
<dbReference type="PROSITE" id="PS51766">
    <property type="entry name" value="DOCKERIN"/>
    <property type="match status" value="1"/>
</dbReference>
<feature type="signal peptide" evidence="2">
    <location>
        <begin position="1"/>
        <end position="32"/>
    </location>
</feature>
<feature type="chain" id="PRO_5000225199" description="Xyloglucanase Xgh74A" evidence="2">
    <location>
        <begin position="33"/>
        <end position="842"/>
    </location>
</feature>
<feature type="repeat" description="BNR 1" evidence="2">
    <location>
        <begin position="134"/>
        <end position="144"/>
    </location>
</feature>
<feature type="repeat" description="BNR 2" evidence="2">
    <location>
        <begin position="185"/>
        <end position="196"/>
    </location>
</feature>
<feature type="repeat" description="BNR 3" evidence="2">
    <location>
        <begin position="252"/>
        <end position="262"/>
    </location>
</feature>
<feature type="repeat" description="BNR 4" evidence="2">
    <location>
        <begin position="358"/>
        <end position="368"/>
    </location>
</feature>
<feature type="repeat" description="BNR 5" evidence="2">
    <location>
        <begin position="533"/>
        <end position="541"/>
    </location>
</feature>
<feature type="repeat" description="BNR 6" evidence="2">
    <location>
        <begin position="577"/>
        <end position="586"/>
    </location>
</feature>
<feature type="repeat" description="BNR 7" evidence="2">
    <location>
        <begin position="616"/>
        <end position="626"/>
    </location>
</feature>
<feature type="repeat" description="BNR 8" evidence="2">
    <location>
        <begin position="660"/>
        <end position="671"/>
    </location>
</feature>
<feature type="repeat" description="BNR 9" evidence="2">
    <location>
        <begin position="708"/>
        <end position="718"/>
    </location>
</feature>
<feature type="domain" description="Dockerin" evidence="3">
    <location>
        <begin position="771"/>
        <end position="841"/>
    </location>
</feature>
<feature type="active site" description="Nucleophile" evidence="1">
    <location>
        <position position="70"/>
    </location>
</feature>
<feature type="active site" description="Proton donor" evidence="1">
    <location>
        <position position="480"/>
    </location>
</feature>
<name>XG74_ACET2</name>
<organism>
    <name type="scientific">Acetivibrio thermocellus (strain ATCC 27405 / DSM 1237 / JCM 9322 / NBRC 103400 / NCIMB 10682 / NRRL B-4536 / VPI 7372)</name>
    <name type="common">Clostridium thermocellum</name>
    <dbReference type="NCBI Taxonomy" id="203119"/>
    <lineage>
        <taxon>Bacteria</taxon>
        <taxon>Bacillati</taxon>
        <taxon>Bacillota</taxon>
        <taxon>Clostridia</taxon>
        <taxon>Eubacteriales</taxon>
        <taxon>Oscillospiraceae</taxon>
        <taxon>Acetivibrio</taxon>
    </lineage>
</organism>
<comment type="function">
    <text evidence="1">Hydrolyzes the glucosidic bonds of unbranched Glc residues in tamarind seed xyloglucan, producing XXXG, XLXG, XXLG and XLLG. Has low activity on carboxymethylcellulose, lichenan,hydroxyethylcellulose and glucuronoxylan, and no activity on xylan, polygalaturonic acid, wheat arabinoxylan, rhamnogalacturan, curdlan, laminarin, galactomannan, galactan, arabinan and pachyman or amorphous cellulose (By similarity).</text>
</comment>
<comment type="similarity">
    <text evidence="1">Belongs to the glycosyl hydrolase 74 family.</text>
</comment>
<sequence length="842" mass="92365">MVKKFTSKIKAAVFAAVVAATAIFGPAISSQAVTSVPYKWDNVVIGGGGGFMPGIVFNETEKDLIYARADIGGAYRWDPSTETWIPLLDHFQMDEYSYYGVESIATDPVDPNRVYIAAGMYTNDWLPNMGAILRSTDRGETWEKTILPFKMGGNMPGRSMGERLAIDPNDNRILYLGTRCGNGLWRSTDYGVTWSKVESFPNPGTYIYDPNFDYTKDIIGVVWVVFDKSSSTPGNPTKTIYVGVADKNESIYRSTDGGVTWKAVPGQPKGLLPHHGVLASNGMLYITYGDTCGPYDGNGKGQVWKFNTRTGEWIDITPIPYSSSDNRFCFAGLAVDRQNPDIIMVTSMNAWWPDEYIFRSTDGGATWKNIWEWGMYPERILHYEIDISAAPWLDWGTEKQLPEINPKLGWMIGDIEIDPFNSDRMMYVTGATIYGCDNLTDWDRGGKVKIEVKATGIEECAVLDLVSPPEGAPLVSAVGDLVGFVHDDLKVGPKKMHVPSYSSGTGIDYAELVPNFMALVAKADLYDVKKISFSYDGGRNWFQPPNEAPNSVGGGSVAVAADAKSVIWTPENASPAVTTDNGNSWKVCTNLGMGAVVASDRVNGKKFYAFYNGKFYISTDGGLTFTDTKAPQLPKSVNKIKAVPGKEGHVWLAAREGGLWRSTDGGYTFEKLSNVDTAHVVGFGKAAPGQDYMAIYITGKIDNVLGFFRSDDAGKTWVRINDDEHGYGAVDTAITGDPRVYGRVYIATNGRGIVYGEPASDEPVPTPPQVDKGLVGDLNGDNRINSTDLTLMKRYILKSIEDLPVEDDLWAADINGDGKINSTDYTYLKKYLLQAIPELPKK</sequence>
<protein>
    <recommendedName>
        <fullName evidence="1">Xyloglucanase Xgh74A</fullName>
        <ecNumber>3.2.1.-</ecNumber>
    </recommendedName>
</protein>
<accession>A3DFA0</accession>
<keyword id="KW-0119">Carbohydrate metabolism</keyword>
<keyword id="KW-0136">Cellulose degradation</keyword>
<keyword id="KW-0326">Glycosidase</keyword>
<keyword id="KW-0378">Hydrolase</keyword>
<keyword id="KW-0624">Polysaccharide degradation</keyword>
<keyword id="KW-1185">Reference proteome</keyword>
<keyword id="KW-0677">Repeat</keyword>
<keyword id="KW-0732">Signal</keyword>